<accession>A4H264</accession>
<dbReference type="EMBL" id="AM410169">
    <property type="protein sequence ID" value="CAL68979.1"/>
    <property type="molecule type" value="Genomic_DNA"/>
</dbReference>
<dbReference type="GO" id="GO:0005576">
    <property type="term" value="C:extracellular region"/>
    <property type="evidence" value="ECO:0007669"/>
    <property type="project" value="UniProtKB-SubCell"/>
</dbReference>
<dbReference type="GO" id="GO:0042742">
    <property type="term" value="P:defense response to bacterium"/>
    <property type="evidence" value="ECO:0007669"/>
    <property type="project" value="UniProtKB-KW"/>
</dbReference>
<dbReference type="GO" id="GO:0045087">
    <property type="term" value="P:innate immune response"/>
    <property type="evidence" value="ECO:0007669"/>
    <property type="project" value="InterPro"/>
</dbReference>
<dbReference type="InterPro" id="IPR050544">
    <property type="entry name" value="Beta-defensin"/>
</dbReference>
<dbReference type="InterPro" id="IPR025933">
    <property type="entry name" value="Beta_defensin_dom"/>
</dbReference>
<dbReference type="PANTHER" id="PTHR15001:SF3">
    <property type="entry name" value="BETA-DEFENSIN 123"/>
    <property type="match status" value="1"/>
</dbReference>
<dbReference type="PANTHER" id="PTHR15001">
    <property type="entry name" value="BETA-DEFENSIN 123-RELATED"/>
    <property type="match status" value="1"/>
</dbReference>
<dbReference type="Pfam" id="PF13841">
    <property type="entry name" value="Defensin_beta_2"/>
    <property type="match status" value="1"/>
</dbReference>
<comment type="function">
    <text evidence="4">Has antibacterial activity.</text>
</comment>
<comment type="subcellular location">
    <subcellularLocation>
        <location evidence="4">Secreted</location>
    </subcellularLocation>
</comment>
<comment type="similarity">
    <text evidence="4">Belongs to the beta-defensin family.</text>
</comment>
<evidence type="ECO:0000250" key="1"/>
<evidence type="ECO:0000255" key="2"/>
<evidence type="ECO:0000256" key="3">
    <source>
        <dbReference type="SAM" id="MobiDB-lite"/>
    </source>
</evidence>
<evidence type="ECO:0000305" key="4"/>
<keyword id="KW-0044">Antibiotic</keyword>
<keyword id="KW-0929">Antimicrobial</keyword>
<keyword id="KW-0211">Defensin</keyword>
<keyword id="KW-1015">Disulfide bond</keyword>
<keyword id="KW-0964">Secreted</keyword>
<keyword id="KW-0732">Signal</keyword>
<proteinExistence type="inferred from homology"/>
<reference key="1">
    <citation type="submission" date="2006-11" db="EMBL/GenBank/DDBJ databases">
        <title>Evolution and sequence variation of human beta-defensin genes.</title>
        <authorList>
            <person name="Hollox E.J."/>
            <person name="Armour J.A.L."/>
        </authorList>
    </citation>
    <scope>NUCLEOTIDE SEQUENCE [GENOMIC DNA]</scope>
</reference>
<feature type="signal peptide" evidence="2">
    <location>
        <begin position="1"/>
        <end position="22"/>
    </location>
</feature>
<feature type="chain" id="PRO_0000289859" description="Beta-defensin 132">
    <location>
        <begin position="23"/>
        <end position="96"/>
    </location>
</feature>
<feature type="region of interest" description="Disordered" evidence="3">
    <location>
        <begin position="74"/>
        <end position="96"/>
    </location>
</feature>
<feature type="compositionally biased region" description="Basic residues" evidence="3">
    <location>
        <begin position="76"/>
        <end position="87"/>
    </location>
</feature>
<feature type="disulfide bond" evidence="1">
    <location>
        <begin position="27"/>
        <end position="55"/>
    </location>
</feature>
<feature type="disulfide bond" evidence="1">
    <location>
        <begin position="35"/>
        <end position="49"/>
    </location>
</feature>
<feature type="disulfide bond" evidence="1">
    <location>
        <begin position="39"/>
        <end position="56"/>
    </location>
</feature>
<gene>
    <name type="primary">DEFB132</name>
</gene>
<organism>
    <name type="scientific">Hylobates lar</name>
    <name type="common">Lar gibbon</name>
    <name type="synonym">White-handed gibbon</name>
    <dbReference type="NCBI Taxonomy" id="9580"/>
    <lineage>
        <taxon>Eukaryota</taxon>
        <taxon>Metazoa</taxon>
        <taxon>Chordata</taxon>
        <taxon>Craniata</taxon>
        <taxon>Vertebrata</taxon>
        <taxon>Euteleostomi</taxon>
        <taxon>Mammalia</taxon>
        <taxon>Eutheria</taxon>
        <taxon>Euarchontoglires</taxon>
        <taxon>Primates</taxon>
        <taxon>Haplorrhini</taxon>
        <taxon>Catarrhini</taxon>
        <taxon>Hylobatidae</taxon>
        <taxon>Hylobates</taxon>
    </lineage>
</organism>
<protein>
    <recommendedName>
        <fullName>Beta-defensin 132</fullName>
    </recommendedName>
    <alternativeName>
        <fullName>Defensin, beta 132</fullName>
    </alternativeName>
</protein>
<sequence length="96" mass="10774">MKFLLLVLAALRFLTQVIPASGGGSKCVSDTQGYCRTYCHQGETALFMCNASRKCCASYSFLPKPDLPQLIGNHWQSRRRNTQRKDKKQQTTVTSS</sequence>
<name>DB132_HYLLA</name>